<accession>P0CAX8</accession>
<accession>Q8K2L9</accession>
<name>TGAP1_MOUSE</name>
<protein>
    <recommendedName>
        <fullName>T-cell activation GTPase-activating protein 1</fullName>
    </recommendedName>
</protein>
<comment type="caution">
    <text evidence="2">Previously thought to be the same gene as Tagap. These are distinct loci that encode proteins with identical C-termini but each with a unique N-terminus.</text>
</comment>
<sequence>MAATTAAVVAEEDTELRDLLVQTLENSGVLNRIKAELRAAVFLALEEQEKVEVKILVEFLIDNCFEIFGENIRTRSRITSDDSLEHTDSSDVSTLQNDSAYDSNDPDVEPTSGAASPNRQLEGPTPTMAGLDTRGHRDTCESSSESSVSMVVRLKNSIVQQDRRFSEPNMSPSRECLVGPTSKQKLTRSEDSFTLSQDASCSEGDEAEDPFTEEVFPAVDSKPKRPVDLKIKNWTQGLASPQGHITKAFSRSSPGESLGSSPVPSPSCPKRNFFTRHQSFTTKTDKTKPQREIRKHSMLFSFASHKKVLPRTSSIGSEKSKDFSRDQLQKDLRKESQLSGRIVQENESEIQSQTSLGFSLSGTWALSVDNTFQLVDMRKPGSPPSYEEAIYYQTSGLTAYGGQTVGSMRSRMFKPSTAVPPVPSHHGGDLSEGTPGGHRLSSVTEHWTHSQTVHVSIETQGRSELHQLRTVSESMQKAKLDCLGPQHSHLVFEADQLCCARESYI</sequence>
<dbReference type="EMBL" id="AF314818">
    <property type="protein sequence ID" value="AAL16686.1"/>
    <property type="molecule type" value="mRNA"/>
</dbReference>
<dbReference type="EMBL" id="AC122413">
    <property type="status" value="NOT_ANNOTATED_CDS"/>
    <property type="molecule type" value="Genomic_DNA"/>
</dbReference>
<dbReference type="CCDS" id="CCDS49940.1"/>
<dbReference type="RefSeq" id="NP_671511.2">
    <property type="nucleotide sequence ID" value="NM_147155.2"/>
</dbReference>
<dbReference type="SMR" id="P0CAX8"/>
<dbReference type="STRING" id="10090.ENSMUSP00000070466"/>
<dbReference type="GlyGen" id="P0CAX8">
    <property type="glycosylation" value="5 sites, 1 O-linked glycan (1 site)"/>
</dbReference>
<dbReference type="iPTMnet" id="P0CAX8"/>
<dbReference type="PaxDb" id="10090-ENSMUSP00000070466"/>
<dbReference type="PeptideAtlas" id="P0CAX8"/>
<dbReference type="ProteomicsDB" id="262807"/>
<dbReference type="DNASU" id="380608"/>
<dbReference type="Ensembl" id="ENSMUST00000063683.8">
    <property type="protein sequence ID" value="ENSMUSP00000070466.7"/>
    <property type="gene ID" value="ENSMUSG00000052031.9"/>
</dbReference>
<dbReference type="GeneID" id="380608"/>
<dbReference type="KEGG" id="mmu:380608"/>
<dbReference type="UCSC" id="uc008aia.1">
    <property type="organism name" value="mouse"/>
</dbReference>
<dbReference type="AGR" id="MGI:1919786"/>
<dbReference type="CTD" id="380608"/>
<dbReference type="MGI" id="MGI:1919786">
    <property type="gene designation" value="Tagap1"/>
</dbReference>
<dbReference type="VEuPathDB" id="HostDB:ENSMUSG00000052031"/>
<dbReference type="eggNOG" id="KOG4724">
    <property type="taxonomic scope" value="Eukaryota"/>
</dbReference>
<dbReference type="GeneTree" id="ENSGT00940000157993"/>
<dbReference type="HOGENOM" id="CLU_014209_1_0_1"/>
<dbReference type="InParanoid" id="P0CAX8"/>
<dbReference type="OMA" id="QIRIECT"/>
<dbReference type="OrthoDB" id="27389at2759"/>
<dbReference type="PhylomeDB" id="P0CAX8"/>
<dbReference type="TreeFam" id="TF331062"/>
<dbReference type="BioGRID-ORCS" id="380608">
    <property type="hits" value="3 hits in 43 CRISPR screens"/>
</dbReference>
<dbReference type="PRO" id="PR:P0CAX8"/>
<dbReference type="Proteomes" id="UP000000589">
    <property type="component" value="Chromosome 17"/>
</dbReference>
<dbReference type="RNAct" id="P0CAX8">
    <property type="molecule type" value="protein"/>
</dbReference>
<dbReference type="Bgee" id="ENSMUSG00000052031">
    <property type="expression patterns" value="Expressed in spermatocyte and 65 other cell types or tissues"/>
</dbReference>
<dbReference type="PANTHER" id="PTHR23179">
    <property type="entry name" value="T-CELL ACTIVATION RHO GTPASE ACTIVATING PROTEIN-RELATED"/>
    <property type="match status" value="1"/>
</dbReference>
<dbReference type="PANTHER" id="PTHR23179:SF26">
    <property type="entry name" value="T-CELL ACTIVATION RHO GTPASE-ACTIVATING PROTEIN"/>
    <property type="match status" value="1"/>
</dbReference>
<evidence type="ECO:0000256" key="1">
    <source>
        <dbReference type="SAM" id="MobiDB-lite"/>
    </source>
</evidence>
<evidence type="ECO:0000305" key="2"/>
<keyword id="KW-1185">Reference proteome</keyword>
<organism>
    <name type="scientific">Mus musculus</name>
    <name type="common">Mouse</name>
    <dbReference type="NCBI Taxonomy" id="10090"/>
    <lineage>
        <taxon>Eukaryota</taxon>
        <taxon>Metazoa</taxon>
        <taxon>Chordata</taxon>
        <taxon>Craniata</taxon>
        <taxon>Vertebrata</taxon>
        <taxon>Euteleostomi</taxon>
        <taxon>Mammalia</taxon>
        <taxon>Eutheria</taxon>
        <taxon>Euarchontoglires</taxon>
        <taxon>Glires</taxon>
        <taxon>Rodentia</taxon>
        <taxon>Myomorpha</taxon>
        <taxon>Muroidea</taxon>
        <taxon>Muridae</taxon>
        <taxon>Murinae</taxon>
        <taxon>Mus</taxon>
        <taxon>Mus</taxon>
    </lineage>
</organism>
<feature type="chain" id="PRO_0000379567" description="T-cell activation GTPase-activating protein 1">
    <location>
        <begin position="1"/>
        <end position="505"/>
    </location>
</feature>
<feature type="region of interest" description="Disordered" evidence="1">
    <location>
        <begin position="81"/>
        <end position="147"/>
    </location>
</feature>
<feature type="region of interest" description="Disordered" evidence="1">
    <location>
        <begin position="160"/>
        <end position="212"/>
    </location>
</feature>
<feature type="region of interest" description="Disordered" evidence="1">
    <location>
        <begin position="242"/>
        <end position="293"/>
    </location>
</feature>
<feature type="region of interest" description="Disordered" evidence="1">
    <location>
        <begin position="311"/>
        <end position="339"/>
    </location>
</feature>
<feature type="region of interest" description="Disordered" evidence="1">
    <location>
        <begin position="414"/>
        <end position="441"/>
    </location>
</feature>
<feature type="compositionally biased region" description="Polar residues" evidence="1">
    <location>
        <begin position="90"/>
        <end position="102"/>
    </location>
</feature>
<feature type="compositionally biased region" description="Acidic residues" evidence="1">
    <location>
        <begin position="203"/>
        <end position="212"/>
    </location>
</feature>
<feature type="compositionally biased region" description="Low complexity" evidence="1">
    <location>
        <begin position="250"/>
        <end position="262"/>
    </location>
</feature>
<feature type="compositionally biased region" description="Basic and acidic residues" evidence="1">
    <location>
        <begin position="283"/>
        <end position="292"/>
    </location>
</feature>
<feature type="compositionally biased region" description="Basic and acidic residues" evidence="1">
    <location>
        <begin position="318"/>
        <end position="336"/>
    </location>
</feature>
<feature type="sequence conflict" description="In Ref. 1; AAL16686." evidence="2" ref="1">
    <original>A</original>
    <variation>T</variation>
    <location>
        <position position="114"/>
    </location>
</feature>
<feature type="sequence conflict" description="In Ref. 1; AAL16686." evidence="2" ref="1">
    <original>G</original>
    <variation>S</variation>
    <location>
        <position position="130"/>
    </location>
</feature>
<feature type="sequence conflict" description="In Ref. 1; AAL16686." evidence="2" ref="1">
    <original>N</original>
    <variation>S</variation>
    <location>
        <position position="156"/>
    </location>
</feature>
<reference key="1">
    <citation type="submission" date="2000-10" db="EMBL/GenBank/DDBJ databases">
        <title>FKSG15, a novel 57 kDa protein, shares the N-terminal region with FOP.</title>
        <authorList>
            <person name="Wang Y.-G."/>
            <person name="Gong L."/>
        </authorList>
    </citation>
    <scope>NUCLEOTIDE SEQUENCE [MRNA]</scope>
</reference>
<reference key="2">
    <citation type="journal article" date="2009" name="PLoS Biol.">
        <title>Lineage-specific biology revealed by a finished genome assembly of the mouse.</title>
        <authorList>
            <person name="Church D.M."/>
            <person name="Goodstadt L."/>
            <person name="Hillier L.W."/>
            <person name="Zody M.C."/>
            <person name="Goldstein S."/>
            <person name="She X."/>
            <person name="Bult C.J."/>
            <person name="Agarwala R."/>
            <person name="Cherry J.L."/>
            <person name="DiCuccio M."/>
            <person name="Hlavina W."/>
            <person name="Kapustin Y."/>
            <person name="Meric P."/>
            <person name="Maglott D."/>
            <person name="Birtle Z."/>
            <person name="Marques A.C."/>
            <person name="Graves T."/>
            <person name="Zhou S."/>
            <person name="Teague B."/>
            <person name="Potamousis K."/>
            <person name="Churas C."/>
            <person name="Place M."/>
            <person name="Herschleb J."/>
            <person name="Runnheim R."/>
            <person name="Forrest D."/>
            <person name="Amos-Landgraf J."/>
            <person name="Schwartz D.C."/>
            <person name="Cheng Z."/>
            <person name="Lindblad-Toh K."/>
            <person name="Eichler E.E."/>
            <person name="Ponting C.P."/>
        </authorList>
    </citation>
    <scope>NUCLEOTIDE SEQUENCE [LARGE SCALE GENOMIC DNA]</scope>
    <source>
        <strain>C57BL/6J</strain>
    </source>
</reference>
<proteinExistence type="evidence at transcript level"/>
<gene>
    <name type="primary">Tagap1</name>
    <name type="ORF">Fksg15</name>
</gene>